<comment type="function">
    <text evidence="1">Catalyzes a salvage reaction resulting in the formation of AMP, that is energically less costly than de novo synthesis.</text>
</comment>
<comment type="catalytic activity">
    <reaction evidence="1">
        <text>AMP + diphosphate = 5-phospho-alpha-D-ribose 1-diphosphate + adenine</text>
        <dbReference type="Rhea" id="RHEA:16609"/>
        <dbReference type="ChEBI" id="CHEBI:16708"/>
        <dbReference type="ChEBI" id="CHEBI:33019"/>
        <dbReference type="ChEBI" id="CHEBI:58017"/>
        <dbReference type="ChEBI" id="CHEBI:456215"/>
        <dbReference type="EC" id="2.4.2.7"/>
    </reaction>
</comment>
<comment type="pathway">
    <text evidence="1">Purine metabolism; AMP biosynthesis via salvage pathway; AMP from adenine: step 1/1.</text>
</comment>
<comment type="subunit">
    <text evidence="1">Homodimer.</text>
</comment>
<comment type="subcellular location">
    <subcellularLocation>
        <location evidence="1">Cytoplasm</location>
    </subcellularLocation>
</comment>
<comment type="similarity">
    <text evidence="1">Belongs to the purine/pyrimidine phosphoribosyltransferase family.</text>
</comment>
<organism>
    <name type="scientific">Streptomyces avermitilis (strain ATCC 31267 / DSM 46492 / JCM 5070 / NBRC 14893 / NCIMB 12804 / NRRL 8165 / MA-4680)</name>
    <dbReference type="NCBI Taxonomy" id="227882"/>
    <lineage>
        <taxon>Bacteria</taxon>
        <taxon>Bacillati</taxon>
        <taxon>Actinomycetota</taxon>
        <taxon>Actinomycetes</taxon>
        <taxon>Kitasatosporales</taxon>
        <taxon>Streptomycetaceae</taxon>
        <taxon>Streptomyces</taxon>
    </lineage>
</organism>
<sequence>MTELVNITELLLSRIRDVRDYPEPGVVFKDITPLLADPAAFTALTGALAELTVRHGATKIVGLEARGFILGAPAAVQAGVGFIPVRKAGKLPGATLSQSYDLEYGSAEIEVHAEDLVAGDRVMVVDDVLATGGTAEASLQLIRRAGAEVAGVSVLMELGFLGGRARLEPALAGAPLEALLQI</sequence>
<accession>Q827T5</accession>
<proteinExistence type="inferred from homology"/>
<gene>
    <name evidence="1" type="primary">apt</name>
    <name type="ordered locus">SAV_6839</name>
</gene>
<dbReference type="EC" id="2.4.2.7" evidence="1"/>
<dbReference type="EMBL" id="BA000030">
    <property type="protein sequence ID" value="BAC74550.1"/>
    <property type="molecule type" value="Genomic_DNA"/>
</dbReference>
<dbReference type="RefSeq" id="WP_010988237.1">
    <property type="nucleotide sequence ID" value="NZ_JZJK01000082.1"/>
</dbReference>
<dbReference type="SMR" id="Q827T5"/>
<dbReference type="GeneID" id="41543914"/>
<dbReference type="KEGG" id="sma:SAVERM_6839"/>
<dbReference type="eggNOG" id="COG0503">
    <property type="taxonomic scope" value="Bacteria"/>
</dbReference>
<dbReference type="HOGENOM" id="CLU_063339_3_0_11"/>
<dbReference type="OrthoDB" id="9803963at2"/>
<dbReference type="UniPathway" id="UPA00588">
    <property type="reaction ID" value="UER00646"/>
</dbReference>
<dbReference type="Proteomes" id="UP000000428">
    <property type="component" value="Chromosome"/>
</dbReference>
<dbReference type="GO" id="GO:0005737">
    <property type="term" value="C:cytoplasm"/>
    <property type="evidence" value="ECO:0007669"/>
    <property type="project" value="UniProtKB-SubCell"/>
</dbReference>
<dbReference type="GO" id="GO:0002055">
    <property type="term" value="F:adenine binding"/>
    <property type="evidence" value="ECO:0007669"/>
    <property type="project" value="TreeGrafter"/>
</dbReference>
<dbReference type="GO" id="GO:0003999">
    <property type="term" value="F:adenine phosphoribosyltransferase activity"/>
    <property type="evidence" value="ECO:0007669"/>
    <property type="project" value="UniProtKB-UniRule"/>
</dbReference>
<dbReference type="GO" id="GO:0016208">
    <property type="term" value="F:AMP binding"/>
    <property type="evidence" value="ECO:0007669"/>
    <property type="project" value="TreeGrafter"/>
</dbReference>
<dbReference type="GO" id="GO:0006168">
    <property type="term" value="P:adenine salvage"/>
    <property type="evidence" value="ECO:0007669"/>
    <property type="project" value="InterPro"/>
</dbReference>
<dbReference type="GO" id="GO:0044209">
    <property type="term" value="P:AMP salvage"/>
    <property type="evidence" value="ECO:0007669"/>
    <property type="project" value="UniProtKB-UniRule"/>
</dbReference>
<dbReference type="GO" id="GO:0006166">
    <property type="term" value="P:purine ribonucleoside salvage"/>
    <property type="evidence" value="ECO:0007669"/>
    <property type="project" value="UniProtKB-KW"/>
</dbReference>
<dbReference type="CDD" id="cd06223">
    <property type="entry name" value="PRTases_typeI"/>
    <property type="match status" value="1"/>
</dbReference>
<dbReference type="FunFam" id="3.40.50.2020:FF:000021">
    <property type="entry name" value="Adenine phosphoribosyltransferase"/>
    <property type="match status" value="1"/>
</dbReference>
<dbReference type="Gene3D" id="3.40.50.2020">
    <property type="match status" value="1"/>
</dbReference>
<dbReference type="HAMAP" id="MF_00004">
    <property type="entry name" value="Aden_phosphoribosyltr"/>
    <property type="match status" value="1"/>
</dbReference>
<dbReference type="InterPro" id="IPR005764">
    <property type="entry name" value="Ade_phspho_trans"/>
</dbReference>
<dbReference type="InterPro" id="IPR000836">
    <property type="entry name" value="PRibTrfase_dom"/>
</dbReference>
<dbReference type="InterPro" id="IPR029057">
    <property type="entry name" value="PRTase-like"/>
</dbReference>
<dbReference type="InterPro" id="IPR050054">
    <property type="entry name" value="UPRTase/APRTase"/>
</dbReference>
<dbReference type="NCBIfam" id="TIGR01090">
    <property type="entry name" value="apt"/>
    <property type="match status" value="1"/>
</dbReference>
<dbReference type="NCBIfam" id="NF002634">
    <property type="entry name" value="PRK02304.1-3"/>
    <property type="match status" value="1"/>
</dbReference>
<dbReference type="NCBIfam" id="NF002636">
    <property type="entry name" value="PRK02304.1-5"/>
    <property type="match status" value="1"/>
</dbReference>
<dbReference type="PANTHER" id="PTHR32315">
    <property type="entry name" value="ADENINE PHOSPHORIBOSYLTRANSFERASE"/>
    <property type="match status" value="1"/>
</dbReference>
<dbReference type="PANTHER" id="PTHR32315:SF3">
    <property type="entry name" value="ADENINE PHOSPHORIBOSYLTRANSFERASE"/>
    <property type="match status" value="1"/>
</dbReference>
<dbReference type="Pfam" id="PF00156">
    <property type="entry name" value="Pribosyltran"/>
    <property type="match status" value="1"/>
</dbReference>
<dbReference type="SUPFAM" id="SSF53271">
    <property type="entry name" value="PRTase-like"/>
    <property type="match status" value="1"/>
</dbReference>
<dbReference type="PROSITE" id="PS00103">
    <property type="entry name" value="PUR_PYR_PR_TRANSFER"/>
    <property type="match status" value="1"/>
</dbReference>
<evidence type="ECO:0000255" key="1">
    <source>
        <dbReference type="HAMAP-Rule" id="MF_00004"/>
    </source>
</evidence>
<name>APT_STRAW</name>
<feature type="chain" id="PRO_0000149460" description="Adenine phosphoribosyltransferase">
    <location>
        <begin position="1"/>
        <end position="182"/>
    </location>
</feature>
<protein>
    <recommendedName>
        <fullName evidence="1">Adenine phosphoribosyltransferase</fullName>
        <shortName evidence="1">APRT</shortName>
        <ecNumber evidence="1">2.4.2.7</ecNumber>
    </recommendedName>
</protein>
<reference key="1">
    <citation type="journal article" date="2001" name="Proc. Natl. Acad. Sci. U.S.A.">
        <title>Genome sequence of an industrial microorganism Streptomyces avermitilis: deducing the ability of producing secondary metabolites.</title>
        <authorList>
            <person name="Omura S."/>
            <person name="Ikeda H."/>
            <person name="Ishikawa J."/>
            <person name="Hanamoto A."/>
            <person name="Takahashi C."/>
            <person name="Shinose M."/>
            <person name="Takahashi Y."/>
            <person name="Horikawa H."/>
            <person name="Nakazawa H."/>
            <person name="Osonoe T."/>
            <person name="Kikuchi H."/>
            <person name="Shiba T."/>
            <person name="Sakaki Y."/>
            <person name="Hattori M."/>
        </authorList>
    </citation>
    <scope>NUCLEOTIDE SEQUENCE [LARGE SCALE GENOMIC DNA]</scope>
    <source>
        <strain>ATCC 31267 / DSM 46492 / JCM 5070 / NBRC 14893 / NCIMB 12804 / NRRL 8165 / MA-4680</strain>
    </source>
</reference>
<reference key="2">
    <citation type="journal article" date="2003" name="Nat. Biotechnol.">
        <title>Complete genome sequence and comparative analysis of the industrial microorganism Streptomyces avermitilis.</title>
        <authorList>
            <person name="Ikeda H."/>
            <person name="Ishikawa J."/>
            <person name="Hanamoto A."/>
            <person name="Shinose M."/>
            <person name="Kikuchi H."/>
            <person name="Shiba T."/>
            <person name="Sakaki Y."/>
            <person name="Hattori M."/>
            <person name="Omura S."/>
        </authorList>
    </citation>
    <scope>NUCLEOTIDE SEQUENCE [LARGE SCALE GENOMIC DNA]</scope>
    <source>
        <strain>ATCC 31267 / DSM 46492 / JCM 5070 / NBRC 14893 / NCIMB 12804 / NRRL 8165 / MA-4680</strain>
    </source>
</reference>
<keyword id="KW-0963">Cytoplasm</keyword>
<keyword id="KW-0328">Glycosyltransferase</keyword>
<keyword id="KW-0660">Purine salvage</keyword>
<keyword id="KW-1185">Reference proteome</keyword>
<keyword id="KW-0808">Transferase</keyword>